<name>RS2_CALMQ</name>
<proteinExistence type="inferred from homology"/>
<sequence length="215" mass="24487">MSNETKQPEQGEEYLVPVERYMAAAVRLGARVSNNYLQERGFIFSVRPDGLRIFNLKRIDERIRIAARMITRYPPSRVMVHSTKPYAFKPIQMFCKFVGCLPVTGRLIPGTLTNPYLTHHIDIDLLMVADPKTDFQAINEASLTGIPVIALVDTDSDPTFIDLMIPCNNKGRNSLALVFWLLARQVLRERGELKPNEDLPVSWEEFRVPVGQSRS</sequence>
<organism>
    <name type="scientific">Caldivirga maquilingensis (strain ATCC 700844 / DSM 13496 / JCM 10307 / IC-167)</name>
    <dbReference type="NCBI Taxonomy" id="397948"/>
    <lineage>
        <taxon>Archaea</taxon>
        <taxon>Thermoproteota</taxon>
        <taxon>Thermoprotei</taxon>
        <taxon>Thermoproteales</taxon>
        <taxon>Thermoproteaceae</taxon>
        <taxon>Caldivirga</taxon>
    </lineage>
</organism>
<dbReference type="EMBL" id="CP000852">
    <property type="protein sequence ID" value="ABW02817.1"/>
    <property type="molecule type" value="Genomic_DNA"/>
</dbReference>
<dbReference type="RefSeq" id="WP_012187036.1">
    <property type="nucleotide sequence ID" value="NC_009954.1"/>
</dbReference>
<dbReference type="SMR" id="A8MC33"/>
<dbReference type="STRING" id="397948.Cmaq_2002"/>
<dbReference type="GeneID" id="5708589"/>
<dbReference type="KEGG" id="cma:Cmaq_2002"/>
<dbReference type="eggNOG" id="arCOG04245">
    <property type="taxonomic scope" value="Archaea"/>
</dbReference>
<dbReference type="HOGENOM" id="CLU_058171_3_0_2"/>
<dbReference type="OrthoDB" id="371797at2157"/>
<dbReference type="Proteomes" id="UP000001137">
    <property type="component" value="Chromosome"/>
</dbReference>
<dbReference type="GO" id="GO:0015935">
    <property type="term" value="C:small ribosomal subunit"/>
    <property type="evidence" value="ECO:0007669"/>
    <property type="project" value="InterPro"/>
</dbReference>
<dbReference type="GO" id="GO:0003735">
    <property type="term" value="F:structural constituent of ribosome"/>
    <property type="evidence" value="ECO:0007669"/>
    <property type="project" value="InterPro"/>
</dbReference>
<dbReference type="GO" id="GO:0006412">
    <property type="term" value="P:translation"/>
    <property type="evidence" value="ECO:0007669"/>
    <property type="project" value="UniProtKB-UniRule"/>
</dbReference>
<dbReference type="CDD" id="cd01425">
    <property type="entry name" value="RPS2"/>
    <property type="match status" value="1"/>
</dbReference>
<dbReference type="FunFam" id="3.40.50.10490:FF:000030">
    <property type="entry name" value="30S ribosomal protein S2"/>
    <property type="match status" value="1"/>
</dbReference>
<dbReference type="Gene3D" id="3.40.50.10490">
    <property type="entry name" value="Glucose-6-phosphate isomerase like protein, domain 1"/>
    <property type="match status" value="1"/>
</dbReference>
<dbReference type="HAMAP" id="MF_00291_A">
    <property type="entry name" value="Ribosomal_uS2_A"/>
    <property type="match status" value="1"/>
</dbReference>
<dbReference type="InterPro" id="IPR001865">
    <property type="entry name" value="Ribosomal_uS2"/>
</dbReference>
<dbReference type="InterPro" id="IPR023454">
    <property type="entry name" value="Ribosomal_uS2_arc"/>
</dbReference>
<dbReference type="InterPro" id="IPR005707">
    <property type="entry name" value="Ribosomal_uS2_euk/arc"/>
</dbReference>
<dbReference type="InterPro" id="IPR023591">
    <property type="entry name" value="Ribosomal_uS2_flav_dom_sf"/>
</dbReference>
<dbReference type="NCBIfam" id="TIGR01012">
    <property type="entry name" value="uS2_euk_arch"/>
    <property type="match status" value="1"/>
</dbReference>
<dbReference type="PANTHER" id="PTHR11489">
    <property type="entry name" value="40S RIBOSOMAL PROTEIN SA"/>
    <property type="match status" value="1"/>
</dbReference>
<dbReference type="Pfam" id="PF00318">
    <property type="entry name" value="Ribosomal_S2"/>
    <property type="match status" value="1"/>
</dbReference>
<dbReference type="PRINTS" id="PR00395">
    <property type="entry name" value="RIBOSOMALS2"/>
</dbReference>
<dbReference type="SUPFAM" id="SSF52313">
    <property type="entry name" value="Ribosomal protein S2"/>
    <property type="match status" value="1"/>
</dbReference>
<feature type="chain" id="PRO_0000352052" description="Small ribosomal subunit protein uS2">
    <location>
        <begin position="1"/>
        <end position="215"/>
    </location>
</feature>
<protein>
    <recommendedName>
        <fullName evidence="1">Small ribosomal subunit protein uS2</fullName>
    </recommendedName>
    <alternativeName>
        <fullName evidence="2">30S ribosomal protein S2</fullName>
    </alternativeName>
</protein>
<accession>A8MC33</accession>
<gene>
    <name evidence="1" type="primary">rps2</name>
    <name type="ordered locus">Cmaq_2002</name>
</gene>
<keyword id="KW-1185">Reference proteome</keyword>
<keyword id="KW-0687">Ribonucleoprotein</keyword>
<keyword id="KW-0689">Ribosomal protein</keyword>
<evidence type="ECO:0000255" key="1">
    <source>
        <dbReference type="HAMAP-Rule" id="MF_00291"/>
    </source>
</evidence>
<evidence type="ECO:0000305" key="2"/>
<comment type="similarity">
    <text evidence="1">Belongs to the universal ribosomal protein uS2 family.</text>
</comment>
<reference key="1">
    <citation type="submission" date="2007-10" db="EMBL/GenBank/DDBJ databases">
        <title>Complete sequence of Caldivirga maquilingensis IC-167.</title>
        <authorList>
            <consortium name="US DOE Joint Genome Institute"/>
            <person name="Copeland A."/>
            <person name="Lucas S."/>
            <person name="Lapidus A."/>
            <person name="Barry K."/>
            <person name="Glavina del Rio T."/>
            <person name="Dalin E."/>
            <person name="Tice H."/>
            <person name="Pitluck S."/>
            <person name="Saunders E."/>
            <person name="Brettin T."/>
            <person name="Bruce D."/>
            <person name="Detter J.C."/>
            <person name="Han C."/>
            <person name="Schmutz J."/>
            <person name="Larimer F."/>
            <person name="Land M."/>
            <person name="Hauser L."/>
            <person name="Kyrpides N."/>
            <person name="Ivanova N."/>
            <person name="Biddle J.F."/>
            <person name="Zhang Z."/>
            <person name="Fitz-Gibbon S.T."/>
            <person name="Lowe T.M."/>
            <person name="Saltikov C."/>
            <person name="House C.H."/>
            <person name="Richardson P."/>
        </authorList>
    </citation>
    <scope>NUCLEOTIDE SEQUENCE [LARGE SCALE GENOMIC DNA]</scope>
    <source>
        <strain>ATCC 700844 / DSM 13496 / JCM 10307 / IC-167</strain>
    </source>
</reference>